<protein>
    <recommendedName>
        <fullName evidence="1">Thymidylate kinase</fullName>
        <ecNumber evidence="1">2.7.4.9</ecNumber>
    </recommendedName>
    <alternativeName>
        <fullName evidence="1">dTMP kinase</fullName>
    </alternativeName>
</protein>
<name>KTHY_RHOBA</name>
<sequence length="245" mass="26542">MAGVGIRSYACHRQTRRLLDGDVLMSPGPGNTDMPQTKSSPIAHPYPGRLITLDGIDGVGKSSQIEILAERLRSEGRNVLCVRDPGSTDLGTKLRAMLLDSDLEMHRRTEAMLFMASRCEMIESTLRSALADGVTVISDRFLLANVVYQSVGGEVDAQTLWQLGRLACGGVQPDVTLLLDLPAEISMQRVGGEADRMESRGVDYMAKVRQAFLDELPNAGGRTHVIDASGTIEEVAETIAAIELF</sequence>
<comment type="function">
    <text evidence="1">Phosphorylation of dTMP to form dTDP in both de novo and salvage pathways of dTTP synthesis.</text>
</comment>
<comment type="catalytic activity">
    <reaction evidence="1">
        <text>dTMP + ATP = dTDP + ADP</text>
        <dbReference type="Rhea" id="RHEA:13517"/>
        <dbReference type="ChEBI" id="CHEBI:30616"/>
        <dbReference type="ChEBI" id="CHEBI:58369"/>
        <dbReference type="ChEBI" id="CHEBI:63528"/>
        <dbReference type="ChEBI" id="CHEBI:456216"/>
        <dbReference type="EC" id="2.7.4.9"/>
    </reaction>
</comment>
<comment type="similarity">
    <text evidence="1">Belongs to the thymidylate kinase family.</text>
</comment>
<evidence type="ECO:0000255" key="1">
    <source>
        <dbReference type="HAMAP-Rule" id="MF_00165"/>
    </source>
</evidence>
<reference key="1">
    <citation type="journal article" date="2003" name="Proc. Natl. Acad. Sci. U.S.A.">
        <title>Complete genome sequence of the marine planctomycete Pirellula sp. strain 1.</title>
        <authorList>
            <person name="Gloeckner F.O."/>
            <person name="Kube M."/>
            <person name="Bauer M."/>
            <person name="Teeling H."/>
            <person name="Lombardot T."/>
            <person name="Ludwig W."/>
            <person name="Gade D."/>
            <person name="Beck A."/>
            <person name="Borzym K."/>
            <person name="Heitmann K."/>
            <person name="Rabus R."/>
            <person name="Schlesner H."/>
            <person name="Amann R."/>
            <person name="Reinhardt R."/>
        </authorList>
    </citation>
    <scope>NUCLEOTIDE SEQUENCE [LARGE SCALE GENOMIC DNA]</scope>
    <source>
        <strain>DSM 10527 / NCIMB 13988 / SH1</strain>
    </source>
</reference>
<accession>Q7UIM1</accession>
<dbReference type="EC" id="2.7.4.9" evidence="1"/>
<dbReference type="EMBL" id="BX294155">
    <property type="protein sequence ID" value="CAD77593.1"/>
    <property type="molecule type" value="Genomic_DNA"/>
</dbReference>
<dbReference type="RefSeq" id="NP_870516.1">
    <property type="nucleotide sequence ID" value="NC_005027.1"/>
</dbReference>
<dbReference type="SMR" id="Q7UIM1"/>
<dbReference type="FunCoup" id="Q7UIM1">
    <property type="interactions" value="470"/>
</dbReference>
<dbReference type="STRING" id="243090.RB12445"/>
<dbReference type="EnsemblBacteria" id="CAD77593">
    <property type="protein sequence ID" value="CAD77593"/>
    <property type="gene ID" value="RB12445"/>
</dbReference>
<dbReference type="KEGG" id="rba:RB12445"/>
<dbReference type="PATRIC" id="fig|243090.15.peg.6021"/>
<dbReference type="eggNOG" id="COG0125">
    <property type="taxonomic scope" value="Bacteria"/>
</dbReference>
<dbReference type="HOGENOM" id="CLU_049131_0_0_0"/>
<dbReference type="InParanoid" id="Q7UIM1"/>
<dbReference type="OrthoDB" id="9774907at2"/>
<dbReference type="Proteomes" id="UP000001025">
    <property type="component" value="Chromosome"/>
</dbReference>
<dbReference type="GO" id="GO:0005737">
    <property type="term" value="C:cytoplasm"/>
    <property type="evidence" value="ECO:0000318"/>
    <property type="project" value="GO_Central"/>
</dbReference>
<dbReference type="GO" id="GO:0005829">
    <property type="term" value="C:cytosol"/>
    <property type="evidence" value="ECO:0000318"/>
    <property type="project" value="GO_Central"/>
</dbReference>
<dbReference type="GO" id="GO:0005524">
    <property type="term" value="F:ATP binding"/>
    <property type="evidence" value="ECO:0007669"/>
    <property type="project" value="UniProtKB-UniRule"/>
</dbReference>
<dbReference type="GO" id="GO:0004798">
    <property type="term" value="F:dTMP kinase activity"/>
    <property type="evidence" value="ECO:0000318"/>
    <property type="project" value="GO_Central"/>
</dbReference>
<dbReference type="GO" id="GO:0006233">
    <property type="term" value="P:dTDP biosynthetic process"/>
    <property type="evidence" value="ECO:0000318"/>
    <property type="project" value="GO_Central"/>
</dbReference>
<dbReference type="GO" id="GO:0006235">
    <property type="term" value="P:dTTP biosynthetic process"/>
    <property type="evidence" value="ECO:0000318"/>
    <property type="project" value="GO_Central"/>
</dbReference>
<dbReference type="GO" id="GO:0006227">
    <property type="term" value="P:dUDP biosynthetic process"/>
    <property type="evidence" value="ECO:0000318"/>
    <property type="project" value="GO_Central"/>
</dbReference>
<dbReference type="CDD" id="cd01672">
    <property type="entry name" value="TMPK"/>
    <property type="match status" value="1"/>
</dbReference>
<dbReference type="FunFam" id="3.40.50.300:FF:000225">
    <property type="entry name" value="Thymidylate kinase"/>
    <property type="match status" value="1"/>
</dbReference>
<dbReference type="Gene3D" id="3.40.50.300">
    <property type="entry name" value="P-loop containing nucleotide triphosphate hydrolases"/>
    <property type="match status" value="1"/>
</dbReference>
<dbReference type="HAMAP" id="MF_00165">
    <property type="entry name" value="Thymidylate_kinase"/>
    <property type="match status" value="1"/>
</dbReference>
<dbReference type="InterPro" id="IPR027417">
    <property type="entry name" value="P-loop_NTPase"/>
</dbReference>
<dbReference type="InterPro" id="IPR039430">
    <property type="entry name" value="Thymidylate_kin-like_dom"/>
</dbReference>
<dbReference type="InterPro" id="IPR018094">
    <property type="entry name" value="Thymidylate_kinase"/>
</dbReference>
<dbReference type="NCBIfam" id="TIGR00041">
    <property type="entry name" value="DTMP_kinase"/>
    <property type="match status" value="1"/>
</dbReference>
<dbReference type="PANTHER" id="PTHR10344">
    <property type="entry name" value="THYMIDYLATE KINASE"/>
    <property type="match status" value="1"/>
</dbReference>
<dbReference type="PANTHER" id="PTHR10344:SF4">
    <property type="entry name" value="UMP-CMP KINASE 2, MITOCHONDRIAL"/>
    <property type="match status" value="1"/>
</dbReference>
<dbReference type="Pfam" id="PF02223">
    <property type="entry name" value="Thymidylate_kin"/>
    <property type="match status" value="1"/>
</dbReference>
<dbReference type="SUPFAM" id="SSF52540">
    <property type="entry name" value="P-loop containing nucleoside triphosphate hydrolases"/>
    <property type="match status" value="1"/>
</dbReference>
<organism>
    <name type="scientific">Rhodopirellula baltica (strain DSM 10527 / NCIMB 13988 / SH1)</name>
    <dbReference type="NCBI Taxonomy" id="243090"/>
    <lineage>
        <taxon>Bacteria</taxon>
        <taxon>Pseudomonadati</taxon>
        <taxon>Planctomycetota</taxon>
        <taxon>Planctomycetia</taxon>
        <taxon>Pirellulales</taxon>
        <taxon>Pirellulaceae</taxon>
        <taxon>Rhodopirellula</taxon>
    </lineage>
</organism>
<keyword id="KW-0067">ATP-binding</keyword>
<keyword id="KW-0418">Kinase</keyword>
<keyword id="KW-0545">Nucleotide biosynthesis</keyword>
<keyword id="KW-0547">Nucleotide-binding</keyword>
<keyword id="KW-1185">Reference proteome</keyword>
<keyword id="KW-0808">Transferase</keyword>
<gene>
    <name evidence="1" type="primary">tmk</name>
    <name type="ordered locus">RB12445</name>
</gene>
<feature type="chain" id="PRO_0000155329" description="Thymidylate kinase">
    <location>
        <begin position="1"/>
        <end position="245"/>
    </location>
</feature>
<feature type="binding site" evidence="1">
    <location>
        <begin position="55"/>
        <end position="62"/>
    </location>
    <ligand>
        <name>ATP</name>
        <dbReference type="ChEBI" id="CHEBI:30616"/>
    </ligand>
</feature>
<proteinExistence type="inferred from homology"/>